<name>PLK4_DROWI</name>
<organism>
    <name type="scientific">Drosophila willistoni</name>
    <name type="common">Fruit fly</name>
    <dbReference type="NCBI Taxonomy" id="7260"/>
    <lineage>
        <taxon>Eukaryota</taxon>
        <taxon>Metazoa</taxon>
        <taxon>Ecdysozoa</taxon>
        <taxon>Arthropoda</taxon>
        <taxon>Hexapoda</taxon>
        <taxon>Insecta</taxon>
        <taxon>Pterygota</taxon>
        <taxon>Neoptera</taxon>
        <taxon>Endopterygota</taxon>
        <taxon>Diptera</taxon>
        <taxon>Brachycera</taxon>
        <taxon>Muscomorpha</taxon>
        <taxon>Ephydroidea</taxon>
        <taxon>Drosophilidae</taxon>
        <taxon>Drosophila</taxon>
        <taxon>Sophophora</taxon>
    </lineage>
</organism>
<keyword id="KW-0067">ATP-binding</keyword>
<keyword id="KW-0963">Cytoplasm</keyword>
<keyword id="KW-0206">Cytoskeleton</keyword>
<keyword id="KW-0418">Kinase</keyword>
<keyword id="KW-0547">Nucleotide-binding</keyword>
<keyword id="KW-1185">Reference proteome</keyword>
<keyword id="KW-0723">Serine/threonine-protein kinase</keyword>
<keyword id="KW-0808">Transferase</keyword>
<keyword id="KW-0832">Ubl conjugation</keyword>
<evidence type="ECO:0000250" key="1"/>
<evidence type="ECO:0000255" key="2">
    <source>
        <dbReference type="PROSITE-ProRule" id="PRU00154"/>
    </source>
</evidence>
<evidence type="ECO:0000255" key="3">
    <source>
        <dbReference type="PROSITE-ProRule" id="PRU00159"/>
    </source>
</evidence>
<evidence type="ECO:0000255" key="4">
    <source>
        <dbReference type="PROSITE-ProRule" id="PRU01328"/>
    </source>
</evidence>
<evidence type="ECO:0000255" key="5">
    <source>
        <dbReference type="PROSITE-ProRule" id="PRU01329"/>
    </source>
</evidence>
<evidence type="ECO:0000256" key="6">
    <source>
        <dbReference type="SAM" id="MobiDB-lite"/>
    </source>
</evidence>
<proteinExistence type="inferred from homology"/>
<reference key="1">
    <citation type="journal article" date="2007" name="Nature">
        <title>Evolution of genes and genomes on the Drosophila phylogeny.</title>
        <authorList>
            <consortium name="Drosophila 12 genomes consortium"/>
        </authorList>
    </citation>
    <scope>NUCLEOTIDE SEQUENCE [LARGE SCALE GENOMIC DNA]</scope>
    <source>
        <strain>Tucson 14030-0811.24</strain>
    </source>
</reference>
<feature type="chain" id="PRO_0000385298" description="Serine/threonine-protein kinase PLK4">
    <location>
        <begin position="1"/>
        <end position="787"/>
    </location>
</feature>
<feature type="domain" description="Protein kinase" evidence="3">
    <location>
        <begin position="14"/>
        <end position="268"/>
    </location>
</feature>
<feature type="domain" description="Cryptic POLO box 1 (CPB1)" evidence="4">
    <location>
        <begin position="386"/>
        <end position="505"/>
    </location>
</feature>
<feature type="domain" description="Cryptic POLO box 2 (CPB2)" evidence="5">
    <location>
        <begin position="506"/>
        <end position="613"/>
    </location>
</feature>
<feature type="domain" description="POLO box" evidence="2">
    <location>
        <begin position="675"/>
        <end position="755"/>
    </location>
</feature>
<feature type="region of interest" description="Disordered" evidence="6">
    <location>
        <begin position="311"/>
        <end position="336"/>
    </location>
</feature>
<feature type="active site" description="Proton acceptor" evidence="3">
    <location>
        <position position="139"/>
    </location>
</feature>
<feature type="binding site" evidence="3">
    <location>
        <begin position="20"/>
        <end position="28"/>
    </location>
    <ligand>
        <name>ATP</name>
        <dbReference type="ChEBI" id="CHEBI:30616"/>
    </ligand>
</feature>
<feature type="binding site" evidence="3">
    <location>
        <position position="43"/>
    </location>
    <ligand>
        <name>ATP</name>
        <dbReference type="ChEBI" id="CHEBI:30616"/>
    </ligand>
</feature>
<gene>
    <name type="primary">SAK</name>
    <name type="ORF">GK17621</name>
</gene>
<comment type="function">
    <text evidence="1">Serine/threonine-protein kinase that plays a central role in centriole duplication. Able to trigger procentriole formation on the surface of the mother centriole cylinder, using mother centriole as a platform, leading to the recruitment of centriole biogenesis proteins such as sas-6. When overexpressed, it is able to induce centrosome amplification through the simultaneous generation of multiple procentrioles adjoining each parental centriole during S phase. Centrosome amplification following overexpression can initiate tumorigenesis, highlighting the importance of centrosome regulation in cancers (By similarity).</text>
</comment>
<comment type="catalytic activity">
    <reaction>
        <text>L-seryl-[protein] + ATP = O-phospho-L-seryl-[protein] + ADP + H(+)</text>
        <dbReference type="Rhea" id="RHEA:17989"/>
        <dbReference type="Rhea" id="RHEA-COMP:9863"/>
        <dbReference type="Rhea" id="RHEA-COMP:11604"/>
        <dbReference type="ChEBI" id="CHEBI:15378"/>
        <dbReference type="ChEBI" id="CHEBI:29999"/>
        <dbReference type="ChEBI" id="CHEBI:30616"/>
        <dbReference type="ChEBI" id="CHEBI:83421"/>
        <dbReference type="ChEBI" id="CHEBI:456216"/>
        <dbReference type="EC" id="2.7.11.21"/>
    </reaction>
</comment>
<comment type="catalytic activity">
    <reaction>
        <text>L-threonyl-[protein] + ATP = O-phospho-L-threonyl-[protein] + ADP + H(+)</text>
        <dbReference type="Rhea" id="RHEA:46608"/>
        <dbReference type="Rhea" id="RHEA-COMP:11060"/>
        <dbReference type="Rhea" id="RHEA-COMP:11605"/>
        <dbReference type="ChEBI" id="CHEBI:15378"/>
        <dbReference type="ChEBI" id="CHEBI:30013"/>
        <dbReference type="ChEBI" id="CHEBI:30616"/>
        <dbReference type="ChEBI" id="CHEBI:61977"/>
        <dbReference type="ChEBI" id="CHEBI:456216"/>
        <dbReference type="EC" id="2.7.11.21"/>
    </reaction>
</comment>
<comment type="subunit">
    <text evidence="1">Homodimer.</text>
</comment>
<comment type="subcellular location">
    <subcellularLocation>
        <location evidence="1">Cytoplasm</location>
        <location evidence="1">Cytoskeleton</location>
        <location evidence="1">Microtubule organizing center</location>
        <location evidence="1">Centrosome</location>
        <location evidence="1">Centriole</location>
    </subcellularLocation>
</comment>
<comment type="PTM">
    <text evidence="1">Ubiquitinated by the SCF(Slimb) ubiquitin ligase complex; leading to its degradation by the proteasome during interphase and regulating centriole number and ensuring the block to centriole reduplication.</text>
</comment>
<comment type="similarity">
    <text evidence="3 4 5">Belongs to the protein kinase superfamily. Ser/Thr protein kinase family. CDC5/Polo subfamily.</text>
</comment>
<protein>
    <recommendedName>
        <fullName>Serine/threonine-protein kinase PLK4</fullName>
        <ecNumber>2.7.11.21</ecNumber>
    </recommendedName>
    <alternativeName>
        <fullName>Polo-like kinase 4</fullName>
        <shortName>PLK-4</shortName>
    </alternativeName>
    <alternativeName>
        <fullName>Serine/threonine-protein kinase SAK</fullName>
    </alternativeName>
</protein>
<sequence length="787" mass="88378">MLPVRNYGETIEEYEVQHLLGKGGFASVYKARCRRTYQDVAIKMIDKKLIHGTGLSSRVRQEVEIHSRLKHPSVLQLYTFFQDANYVYLVLELAHNGELHRYMNQQMSHPFTEADAATILQQVVAGLLYLHSHNIMHRDISLSNLLLSKDMHVKIADFGLATQLKRPDEKHMTMCGTPNFISPEVVSRLSHGLAADVWSVGCLLYTLVVGRPPFDTDAVQSTLNKVVMSEFIMPTHLSFEACDLIEKLLKKNPHERISLEQVLRHPFMSKRSAGAEEPQYNSSKPGACDFYMEAQGQSVASGDSGIVTFASNESRSSQRLRSIEKSAQSSSNPQMLPQIQEEYGYWQPSTEHKPYPMPLSSDNAEWERLGSKGNQPHTAASVITEEQQMRVPPLNTIRLQPTRYKTKNAIMSILRHGEVVLEFVKFRSKLNEDRVTDICRISGDGRRIIIYQPDPGRGLPIREQPPPPESHIAGDKSVYNYDSLPSKHWKKYLYAARFVGLVKSKTPKITYFSSLAKCHLMENMIDFEMSYYSGAKYVKTSPGEELKLYNNYGMLLSDLACPEAKKMIEHGNECFSHCINICNALELAQQSADSRNTCFPVTIGRRPLTDVSHSQRFDGLRDTTNIAYSTPKSHQGSINFSMSTISSVQNGSESVSSTHSHASRAQIQASQQNVPIKRINIPDVGIATELSHGIVQVQFYDGSMISLIPEIQGGGLTYTQCNGVSTYFPKYDGDLPLAVRDRLAQIPQVKLRLKCAPLLSNHRKADNIAMTPKSTTPSTPCYNRIVL</sequence>
<accession>B4MXR8</accession>
<dbReference type="EC" id="2.7.11.21"/>
<dbReference type="EMBL" id="CH963876">
    <property type="protein sequence ID" value="EDW76837.1"/>
    <property type="molecule type" value="Genomic_DNA"/>
</dbReference>
<dbReference type="SMR" id="B4MXR8"/>
<dbReference type="STRING" id="7260.B4MXR8"/>
<dbReference type="EnsemblMetazoa" id="FBtr0248272">
    <property type="protein sequence ID" value="FBpp0246764"/>
    <property type="gene ID" value="FBgn0219620"/>
</dbReference>
<dbReference type="EnsemblMetazoa" id="XM_002065815.4">
    <property type="protein sequence ID" value="XP_002065851.1"/>
    <property type="gene ID" value="LOC6642935"/>
</dbReference>
<dbReference type="GeneID" id="6642935"/>
<dbReference type="KEGG" id="dwi:6642935"/>
<dbReference type="eggNOG" id="KOG0575">
    <property type="taxonomic scope" value="Eukaryota"/>
</dbReference>
<dbReference type="HOGENOM" id="CLU_008726_2_0_1"/>
<dbReference type="OMA" id="LPSKHWK"/>
<dbReference type="OrthoDB" id="10004143at2759"/>
<dbReference type="PhylomeDB" id="B4MXR8"/>
<dbReference type="ChiTaRS" id="SAK">
    <property type="organism name" value="fly"/>
</dbReference>
<dbReference type="Proteomes" id="UP000007798">
    <property type="component" value="Unassembled WGS sequence"/>
</dbReference>
<dbReference type="GO" id="GO:0005814">
    <property type="term" value="C:centriole"/>
    <property type="evidence" value="ECO:0007669"/>
    <property type="project" value="UniProtKB-SubCell"/>
</dbReference>
<dbReference type="GO" id="GO:0005737">
    <property type="term" value="C:cytoplasm"/>
    <property type="evidence" value="ECO:0007669"/>
    <property type="project" value="UniProtKB-KW"/>
</dbReference>
<dbReference type="GO" id="GO:0005634">
    <property type="term" value="C:nucleus"/>
    <property type="evidence" value="ECO:0007669"/>
    <property type="project" value="TreeGrafter"/>
</dbReference>
<dbReference type="GO" id="GO:0005524">
    <property type="term" value="F:ATP binding"/>
    <property type="evidence" value="ECO:0007669"/>
    <property type="project" value="UniProtKB-KW"/>
</dbReference>
<dbReference type="GO" id="GO:0042802">
    <property type="term" value="F:identical protein binding"/>
    <property type="evidence" value="ECO:0007669"/>
    <property type="project" value="EnsemblMetazoa"/>
</dbReference>
<dbReference type="GO" id="GO:0106310">
    <property type="term" value="F:protein serine kinase activity"/>
    <property type="evidence" value="ECO:0007669"/>
    <property type="project" value="RHEA"/>
</dbReference>
<dbReference type="GO" id="GO:0004674">
    <property type="term" value="F:protein serine/threonine kinase activity"/>
    <property type="evidence" value="ECO:0007669"/>
    <property type="project" value="UniProtKB-KW"/>
</dbReference>
<dbReference type="GO" id="GO:0007099">
    <property type="term" value="P:centriole replication"/>
    <property type="evidence" value="ECO:0007669"/>
    <property type="project" value="EnsemblMetazoa"/>
</dbReference>
<dbReference type="GO" id="GO:0007140">
    <property type="term" value="P:male meiotic nuclear division"/>
    <property type="evidence" value="ECO:0007669"/>
    <property type="project" value="EnsemblMetazoa"/>
</dbReference>
<dbReference type="GO" id="GO:0045732">
    <property type="term" value="P:positive regulation of protein catabolic process"/>
    <property type="evidence" value="ECO:0007669"/>
    <property type="project" value="EnsemblMetazoa"/>
</dbReference>
<dbReference type="GO" id="GO:0046599">
    <property type="term" value="P:regulation of centriole replication"/>
    <property type="evidence" value="ECO:0007669"/>
    <property type="project" value="EnsemblMetazoa"/>
</dbReference>
<dbReference type="GO" id="GO:0031647">
    <property type="term" value="P:regulation of protein stability"/>
    <property type="evidence" value="ECO:0007669"/>
    <property type="project" value="EnsemblMetazoa"/>
</dbReference>
<dbReference type="GO" id="GO:0007288">
    <property type="term" value="P:sperm axoneme assembly"/>
    <property type="evidence" value="ECO:0007669"/>
    <property type="project" value="EnsemblMetazoa"/>
</dbReference>
<dbReference type="GO" id="GO:0035186">
    <property type="term" value="P:syncytial blastoderm mitotic cell cycle"/>
    <property type="evidence" value="ECO:0007669"/>
    <property type="project" value="EnsemblMetazoa"/>
</dbReference>
<dbReference type="CDD" id="cd13114">
    <property type="entry name" value="POLO_box_Plk4_1"/>
    <property type="match status" value="1"/>
</dbReference>
<dbReference type="CDD" id="cd13115">
    <property type="entry name" value="POLO_box_Plk4_2"/>
    <property type="match status" value="1"/>
</dbReference>
<dbReference type="FunFam" id="3.30.200.20:FF:000042">
    <property type="entry name" value="Aurora kinase A"/>
    <property type="match status" value="1"/>
</dbReference>
<dbReference type="FunFam" id="1.10.510.10:FF:000576">
    <property type="entry name" value="Serine/threonine-protein kinase PLK4"/>
    <property type="match status" value="1"/>
</dbReference>
<dbReference type="FunFam" id="3.30.1120.120:FF:000001">
    <property type="entry name" value="serine/threonine-protein kinase PLK4 isoform X2"/>
    <property type="match status" value="1"/>
</dbReference>
<dbReference type="Gene3D" id="2.40.50.930">
    <property type="match status" value="1"/>
</dbReference>
<dbReference type="Gene3D" id="3.30.1120.120">
    <property type="match status" value="1"/>
</dbReference>
<dbReference type="Gene3D" id="3.30.1120.130">
    <property type="match status" value="1"/>
</dbReference>
<dbReference type="Gene3D" id="1.10.510.10">
    <property type="entry name" value="Transferase(Phosphotransferase) domain 1"/>
    <property type="match status" value="1"/>
</dbReference>
<dbReference type="InterPro" id="IPR011009">
    <property type="entry name" value="Kinase-like_dom_sf"/>
</dbReference>
<dbReference type="InterPro" id="IPR047108">
    <property type="entry name" value="Plk4-like_POLO_box_2_sf"/>
</dbReference>
<dbReference type="InterPro" id="IPR000959">
    <property type="entry name" value="POLO_box_dom"/>
</dbReference>
<dbReference type="InterPro" id="IPR033699">
    <property type="entry name" value="POLO_box_Plk4_1"/>
</dbReference>
<dbReference type="InterPro" id="IPR033698">
    <property type="entry name" value="POLO_box_Plk4_2"/>
</dbReference>
<dbReference type="InterPro" id="IPR000719">
    <property type="entry name" value="Prot_kinase_dom"/>
</dbReference>
<dbReference type="InterPro" id="IPR017441">
    <property type="entry name" value="Protein_kinase_ATP_BS"/>
</dbReference>
<dbReference type="InterPro" id="IPR046437">
    <property type="entry name" value="Ser_Thr-PK_POLO_box_1_sf"/>
</dbReference>
<dbReference type="InterPro" id="IPR008266">
    <property type="entry name" value="Tyr_kinase_AS"/>
</dbReference>
<dbReference type="PANTHER" id="PTHR24345">
    <property type="entry name" value="SERINE/THREONINE-PROTEIN KINASE PLK"/>
    <property type="match status" value="1"/>
</dbReference>
<dbReference type="PANTHER" id="PTHR24345:SF91">
    <property type="entry name" value="SERINE_THREONINE-PROTEIN KINASE PLK4"/>
    <property type="match status" value="1"/>
</dbReference>
<dbReference type="Pfam" id="PF00069">
    <property type="entry name" value="Pkinase"/>
    <property type="match status" value="1"/>
</dbReference>
<dbReference type="Pfam" id="PF18190">
    <property type="entry name" value="Plk4_PB1"/>
    <property type="match status" value="1"/>
</dbReference>
<dbReference type="Pfam" id="PF18409">
    <property type="entry name" value="Plk4_PB2"/>
    <property type="match status" value="1"/>
</dbReference>
<dbReference type="SUPFAM" id="SSF82615">
    <property type="entry name" value="Polo-box domain"/>
    <property type="match status" value="1"/>
</dbReference>
<dbReference type="SUPFAM" id="SSF56112">
    <property type="entry name" value="Protein kinase-like (PK-like)"/>
    <property type="match status" value="1"/>
</dbReference>
<dbReference type="PROSITE" id="PS51984">
    <property type="entry name" value="CPB1"/>
    <property type="match status" value="1"/>
</dbReference>
<dbReference type="PROSITE" id="PS51985">
    <property type="entry name" value="CPB2"/>
    <property type="match status" value="1"/>
</dbReference>
<dbReference type="PROSITE" id="PS50078">
    <property type="entry name" value="POLO_BOX"/>
    <property type="match status" value="1"/>
</dbReference>
<dbReference type="PROSITE" id="PS00107">
    <property type="entry name" value="PROTEIN_KINASE_ATP"/>
    <property type="match status" value="1"/>
</dbReference>
<dbReference type="PROSITE" id="PS50011">
    <property type="entry name" value="PROTEIN_KINASE_DOM"/>
    <property type="match status" value="1"/>
</dbReference>